<accession>A8GIP4</accession>
<protein>
    <recommendedName>
        <fullName evidence="1">Lysine--tRNA ligase</fullName>
        <ecNumber evidence="1">6.1.1.6</ecNumber>
    </recommendedName>
    <alternativeName>
        <fullName evidence="1">Lysyl-tRNA synthetase</fullName>
        <shortName evidence="1">LysRS</shortName>
    </alternativeName>
</protein>
<dbReference type="EC" id="6.1.1.6" evidence="1"/>
<dbReference type="EMBL" id="CP000826">
    <property type="protein sequence ID" value="ABV42984.1"/>
    <property type="molecule type" value="Genomic_DNA"/>
</dbReference>
<dbReference type="SMR" id="A8GIP4"/>
<dbReference type="STRING" id="399741.Spro_3888"/>
<dbReference type="KEGG" id="spe:Spro_3888"/>
<dbReference type="eggNOG" id="COG1190">
    <property type="taxonomic scope" value="Bacteria"/>
</dbReference>
<dbReference type="HOGENOM" id="CLU_008255_6_0_6"/>
<dbReference type="OrthoDB" id="9801152at2"/>
<dbReference type="GO" id="GO:0005829">
    <property type="term" value="C:cytosol"/>
    <property type="evidence" value="ECO:0007669"/>
    <property type="project" value="TreeGrafter"/>
</dbReference>
<dbReference type="GO" id="GO:0005524">
    <property type="term" value="F:ATP binding"/>
    <property type="evidence" value="ECO:0007669"/>
    <property type="project" value="UniProtKB-UniRule"/>
</dbReference>
<dbReference type="GO" id="GO:0004824">
    <property type="term" value="F:lysine-tRNA ligase activity"/>
    <property type="evidence" value="ECO:0007669"/>
    <property type="project" value="UniProtKB-UniRule"/>
</dbReference>
<dbReference type="GO" id="GO:0000287">
    <property type="term" value="F:magnesium ion binding"/>
    <property type="evidence" value="ECO:0007669"/>
    <property type="project" value="UniProtKB-UniRule"/>
</dbReference>
<dbReference type="GO" id="GO:0000049">
    <property type="term" value="F:tRNA binding"/>
    <property type="evidence" value="ECO:0007669"/>
    <property type="project" value="TreeGrafter"/>
</dbReference>
<dbReference type="GO" id="GO:0006430">
    <property type="term" value="P:lysyl-tRNA aminoacylation"/>
    <property type="evidence" value="ECO:0007669"/>
    <property type="project" value="UniProtKB-UniRule"/>
</dbReference>
<dbReference type="CDD" id="cd00775">
    <property type="entry name" value="LysRS_core"/>
    <property type="match status" value="1"/>
</dbReference>
<dbReference type="CDD" id="cd04322">
    <property type="entry name" value="LysRS_N"/>
    <property type="match status" value="1"/>
</dbReference>
<dbReference type="FunFam" id="2.40.50.140:FF:000024">
    <property type="entry name" value="Lysine--tRNA ligase"/>
    <property type="match status" value="1"/>
</dbReference>
<dbReference type="FunFam" id="3.30.930.10:FF:000001">
    <property type="entry name" value="Lysine--tRNA ligase"/>
    <property type="match status" value="1"/>
</dbReference>
<dbReference type="Gene3D" id="3.30.930.10">
    <property type="entry name" value="Bira Bifunctional Protein, Domain 2"/>
    <property type="match status" value="1"/>
</dbReference>
<dbReference type="Gene3D" id="2.40.50.140">
    <property type="entry name" value="Nucleic acid-binding proteins"/>
    <property type="match status" value="1"/>
</dbReference>
<dbReference type="HAMAP" id="MF_00252">
    <property type="entry name" value="Lys_tRNA_synth_class2"/>
    <property type="match status" value="1"/>
</dbReference>
<dbReference type="InterPro" id="IPR004364">
    <property type="entry name" value="Aa-tRNA-synt_II"/>
</dbReference>
<dbReference type="InterPro" id="IPR006195">
    <property type="entry name" value="aa-tRNA-synth_II"/>
</dbReference>
<dbReference type="InterPro" id="IPR045864">
    <property type="entry name" value="aa-tRNA-synth_II/BPL/LPL"/>
</dbReference>
<dbReference type="InterPro" id="IPR002313">
    <property type="entry name" value="Lys-tRNA-ligase_II"/>
</dbReference>
<dbReference type="InterPro" id="IPR034762">
    <property type="entry name" value="Lys-tRNA-ligase_II_bac/euk"/>
</dbReference>
<dbReference type="InterPro" id="IPR044136">
    <property type="entry name" value="Lys-tRNA-ligase_II_N"/>
</dbReference>
<dbReference type="InterPro" id="IPR018149">
    <property type="entry name" value="Lys-tRNA-synth_II_C"/>
</dbReference>
<dbReference type="InterPro" id="IPR012340">
    <property type="entry name" value="NA-bd_OB-fold"/>
</dbReference>
<dbReference type="InterPro" id="IPR004365">
    <property type="entry name" value="NA-bd_OB_tRNA"/>
</dbReference>
<dbReference type="NCBIfam" id="TIGR00499">
    <property type="entry name" value="lysS_bact"/>
    <property type="match status" value="1"/>
</dbReference>
<dbReference type="NCBIfam" id="NF001756">
    <property type="entry name" value="PRK00484.1"/>
    <property type="match status" value="1"/>
</dbReference>
<dbReference type="NCBIfam" id="NF009101">
    <property type="entry name" value="PRK12445.1"/>
    <property type="match status" value="1"/>
</dbReference>
<dbReference type="PANTHER" id="PTHR42918:SF15">
    <property type="entry name" value="LYSINE--TRNA LIGASE, CHLOROPLASTIC_MITOCHONDRIAL"/>
    <property type="match status" value="1"/>
</dbReference>
<dbReference type="PANTHER" id="PTHR42918">
    <property type="entry name" value="LYSYL-TRNA SYNTHETASE"/>
    <property type="match status" value="1"/>
</dbReference>
<dbReference type="Pfam" id="PF00152">
    <property type="entry name" value="tRNA-synt_2"/>
    <property type="match status" value="1"/>
</dbReference>
<dbReference type="Pfam" id="PF01336">
    <property type="entry name" value="tRNA_anti-codon"/>
    <property type="match status" value="1"/>
</dbReference>
<dbReference type="PIRSF" id="PIRSF039101">
    <property type="entry name" value="LysRS2"/>
    <property type="match status" value="1"/>
</dbReference>
<dbReference type="PRINTS" id="PR00982">
    <property type="entry name" value="TRNASYNTHLYS"/>
</dbReference>
<dbReference type="SUPFAM" id="SSF55681">
    <property type="entry name" value="Class II aaRS and biotin synthetases"/>
    <property type="match status" value="1"/>
</dbReference>
<dbReference type="SUPFAM" id="SSF50249">
    <property type="entry name" value="Nucleic acid-binding proteins"/>
    <property type="match status" value="1"/>
</dbReference>
<dbReference type="PROSITE" id="PS50862">
    <property type="entry name" value="AA_TRNA_LIGASE_II"/>
    <property type="match status" value="1"/>
</dbReference>
<comment type="catalytic activity">
    <reaction evidence="1">
        <text>tRNA(Lys) + L-lysine + ATP = L-lysyl-tRNA(Lys) + AMP + diphosphate</text>
        <dbReference type="Rhea" id="RHEA:20792"/>
        <dbReference type="Rhea" id="RHEA-COMP:9696"/>
        <dbReference type="Rhea" id="RHEA-COMP:9697"/>
        <dbReference type="ChEBI" id="CHEBI:30616"/>
        <dbReference type="ChEBI" id="CHEBI:32551"/>
        <dbReference type="ChEBI" id="CHEBI:33019"/>
        <dbReference type="ChEBI" id="CHEBI:78442"/>
        <dbReference type="ChEBI" id="CHEBI:78529"/>
        <dbReference type="ChEBI" id="CHEBI:456215"/>
        <dbReference type="EC" id="6.1.1.6"/>
    </reaction>
</comment>
<comment type="cofactor">
    <cofactor evidence="1">
        <name>Mg(2+)</name>
        <dbReference type="ChEBI" id="CHEBI:18420"/>
    </cofactor>
    <text evidence="1">Binds 3 Mg(2+) ions per subunit.</text>
</comment>
<comment type="subunit">
    <text evidence="1">Homodimer.</text>
</comment>
<comment type="subcellular location">
    <subcellularLocation>
        <location evidence="1">Cytoplasm</location>
    </subcellularLocation>
</comment>
<comment type="similarity">
    <text evidence="1">Belongs to the class-II aminoacyl-tRNA synthetase family.</text>
</comment>
<sequence>MSEQQPQGAEQALDLNNELQSRREKLAALRENGIAFPNDFRRDTTSDKLHAAYGDKDNEELEALGVEVTVAGRMMTRRIMGKASFVTLQDVGGRIQLYVARDDLAEGVYNEEFKKWDLGDILGARGKLFKTKTGELSIHCTELRLLTKALRPLPDKFHGLADQETRYRQRYLDLIANDESRKTFQVRSQIMAAMRNFMVERGFMEVETPMMQVIPGGASARPFVTHHNALDIDMYLRIAPELYLKRLVVGGFERVFEINRNFRNEGVSPRHNPEFTMMELYMAYADYKDLIELTESLFRTLTQNVLGNTQVQYGDEVFDFGKPFVKLTMTEAIKKYRPETDLADLADMGKAVAIAESIGIKVEKSWGLGRVVTEIFEEVAESHLIQPTFITEYPAEVSPLARRNDVNPEITDRFEFFIGGREIGNGFSELNDAEDQAQRFADQANAKDAGDDEAMFYDEDYVTALEHGLPPTAGLGIGIDRMVMLFTNSHTIRDVILFPAMRPQK</sequence>
<organism>
    <name type="scientific">Serratia proteamaculans (strain 568)</name>
    <dbReference type="NCBI Taxonomy" id="399741"/>
    <lineage>
        <taxon>Bacteria</taxon>
        <taxon>Pseudomonadati</taxon>
        <taxon>Pseudomonadota</taxon>
        <taxon>Gammaproteobacteria</taxon>
        <taxon>Enterobacterales</taxon>
        <taxon>Yersiniaceae</taxon>
        <taxon>Serratia</taxon>
    </lineage>
</organism>
<evidence type="ECO:0000255" key="1">
    <source>
        <dbReference type="HAMAP-Rule" id="MF_00252"/>
    </source>
</evidence>
<name>SYK_SERP5</name>
<gene>
    <name evidence="1" type="primary">lysS</name>
    <name type="ordered locus">Spro_3888</name>
</gene>
<reference key="1">
    <citation type="submission" date="2007-09" db="EMBL/GenBank/DDBJ databases">
        <title>Complete sequence of chromosome of Serratia proteamaculans 568.</title>
        <authorList>
            <consortium name="US DOE Joint Genome Institute"/>
            <person name="Copeland A."/>
            <person name="Lucas S."/>
            <person name="Lapidus A."/>
            <person name="Barry K."/>
            <person name="Glavina del Rio T."/>
            <person name="Dalin E."/>
            <person name="Tice H."/>
            <person name="Pitluck S."/>
            <person name="Chain P."/>
            <person name="Malfatti S."/>
            <person name="Shin M."/>
            <person name="Vergez L."/>
            <person name="Schmutz J."/>
            <person name="Larimer F."/>
            <person name="Land M."/>
            <person name="Hauser L."/>
            <person name="Kyrpides N."/>
            <person name="Kim E."/>
            <person name="Taghavi S."/>
            <person name="Newman L."/>
            <person name="Vangronsveld J."/>
            <person name="van der Lelie D."/>
            <person name="Richardson P."/>
        </authorList>
    </citation>
    <scope>NUCLEOTIDE SEQUENCE [LARGE SCALE GENOMIC DNA]</scope>
    <source>
        <strain>568</strain>
    </source>
</reference>
<proteinExistence type="inferred from homology"/>
<feature type="chain" id="PRO_1000059042" description="Lysine--tRNA ligase">
    <location>
        <begin position="1"/>
        <end position="505"/>
    </location>
</feature>
<feature type="binding site" evidence="1">
    <location>
        <position position="415"/>
    </location>
    <ligand>
        <name>Mg(2+)</name>
        <dbReference type="ChEBI" id="CHEBI:18420"/>
        <label>1</label>
    </ligand>
</feature>
<feature type="binding site" evidence="1">
    <location>
        <position position="422"/>
    </location>
    <ligand>
        <name>Mg(2+)</name>
        <dbReference type="ChEBI" id="CHEBI:18420"/>
        <label>1</label>
    </ligand>
</feature>
<feature type="binding site" evidence="1">
    <location>
        <position position="422"/>
    </location>
    <ligand>
        <name>Mg(2+)</name>
        <dbReference type="ChEBI" id="CHEBI:18420"/>
        <label>2</label>
    </ligand>
</feature>
<keyword id="KW-0030">Aminoacyl-tRNA synthetase</keyword>
<keyword id="KW-0067">ATP-binding</keyword>
<keyword id="KW-0963">Cytoplasm</keyword>
<keyword id="KW-0436">Ligase</keyword>
<keyword id="KW-0460">Magnesium</keyword>
<keyword id="KW-0479">Metal-binding</keyword>
<keyword id="KW-0547">Nucleotide-binding</keyword>
<keyword id="KW-0648">Protein biosynthesis</keyword>